<evidence type="ECO:0000255" key="1">
    <source>
        <dbReference type="HAMAP-Rule" id="MF_03122"/>
    </source>
</evidence>
<evidence type="ECO:0000305" key="2"/>
<accession>A6RZS5</accession>
<accession>A0A384JCX3</accession>
<organism>
    <name type="scientific">Botryotinia fuckeliana (strain B05.10)</name>
    <name type="common">Noble rot fungus</name>
    <name type="synonym">Botrytis cinerea</name>
    <dbReference type="NCBI Taxonomy" id="332648"/>
    <lineage>
        <taxon>Eukaryota</taxon>
        <taxon>Fungi</taxon>
        <taxon>Dikarya</taxon>
        <taxon>Ascomycota</taxon>
        <taxon>Pezizomycotina</taxon>
        <taxon>Leotiomycetes</taxon>
        <taxon>Helotiales</taxon>
        <taxon>Sclerotiniaceae</taxon>
        <taxon>Botrytis</taxon>
    </lineage>
</organism>
<proteinExistence type="inferred from homology"/>
<feature type="initiator methionine" description="Removed" evidence="1">
    <location>
        <position position="1"/>
    </location>
</feature>
<feature type="chain" id="PRO_0000389363" description="Small ribosomal subunit protein eS1">
    <location>
        <begin position="2"/>
        <end position="256"/>
    </location>
</feature>
<feature type="modified residue" description="N-acetylalanine; partial" evidence="1">
    <location>
        <position position="2"/>
    </location>
</feature>
<sequence length="256" mass="29246">MAVGKNKRLSKGKKGLKKKTLDPFTRKDWYQIKAPSSFQIRDVGKTLVNRTTGLKNANDSLKGRIVEVSLADLQKDEDHAFRKVKLRVDEVQGKNCLTNFHGLDFTSDKLRSLVRKWQSLIEANITVKTTDDYLLRLFAIAFTKRRPNQIKKTTYAASSQIRAIRKKMTEIIQREASTCTLTQLTAKLIPEVIGREIEKATQGIYPLQNVHIRKVKLLKAPKFDLGALLNLHGESNTDEQGQKVEREFKEKVLEEV</sequence>
<dbReference type="EMBL" id="CP009807">
    <property type="protein sequence ID" value="ATZ48393.1"/>
    <property type="molecule type" value="Genomic_DNA"/>
</dbReference>
<dbReference type="RefSeq" id="XP_001555389.1">
    <property type="nucleotide sequence ID" value="XM_001555339.1"/>
</dbReference>
<dbReference type="SMR" id="A6RZS5"/>
<dbReference type="EnsemblFungi" id="Bcin03g06170.1">
    <property type="protein sequence ID" value="Bcin03p06170.1"/>
    <property type="gene ID" value="Bcin03g06170"/>
</dbReference>
<dbReference type="GeneID" id="5435936"/>
<dbReference type="KEGG" id="bfu:BCIN_03g06170"/>
<dbReference type="VEuPathDB" id="FungiDB:Bcin03g06170"/>
<dbReference type="OMA" id="TRFKGHE"/>
<dbReference type="OrthoDB" id="9834376at2759"/>
<dbReference type="Proteomes" id="UP000001798">
    <property type="component" value="Chromosome bcin03"/>
</dbReference>
<dbReference type="GO" id="GO:0022627">
    <property type="term" value="C:cytosolic small ribosomal subunit"/>
    <property type="evidence" value="ECO:0007669"/>
    <property type="project" value="UniProtKB-UniRule"/>
</dbReference>
<dbReference type="GO" id="GO:0003735">
    <property type="term" value="F:structural constituent of ribosome"/>
    <property type="evidence" value="ECO:0007669"/>
    <property type="project" value="UniProtKB-UniRule"/>
</dbReference>
<dbReference type="GO" id="GO:0006412">
    <property type="term" value="P:translation"/>
    <property type="evidence" value="ECO:0007669"/>
    <property type="project" value="UniProtKB-UniRule"/>
</dbReference>
<dbReference type="HAMAP" id="MF_03122">
    <property type="entry name" value="Ribosomal_eS1_euk"/>
    <property type="match status" value="1"/>
</dbReference>
<dbReference type="InterPro" id="IPR001593">
    <property type="entry name" value="Ribosomal_eS1"/>
</dbReference>
<dbReference type="InterPro" id="IPR018281">
    <property type="entry name" value="Ribosomal_eS1_CS"/>
</dbReference>
<dbReference type="InterPro" id="IPR027500">
    <property type="entry name" value="Ribosomal_eS1_euk"/>
</dbReference>
<dbReference type="PANTHER" id="PTHR11830">
    <property type="entry name" value="40S RIBOSOMAL PROTEIN S3A"/>
    <property type="match status" value="1"/>
</dbReference>
<dbReference type="Pfam" id="PF01015">
    <property type="entry name" value="Ribosomal_S3Ae"/>
    <property type="match status" value="1"/>
</dbReference>
<dbReference type="SMART" id="SM01397">
    <property type="entry name" value="Ribosomal_S3Ae"/>
    <property type="match status" value="1"/>
</dbReference>
<dbReference type="PROSITE" id="PS01191">
    <property type="entry name" value="RIBOSOMAL_S3AE"/>
    <property type="match status" value="1"/>
</dbReference>
<gene>
    <name type="primary">rps1</name>
    <name type="ORF">BC1G_06094</name>
    <name type="ORF">BCIN_03g06170</name>
</gene>
<reference key="1">
    <citation type="journal article" date="2011" name="PLoS Genet.">
        <title>Genomic analysis of the necrotrophic fungal pathogens Sclerotinia sclerotiorum and Botrytis cinerea.</title>
        <authorList>
            <person name="Amselem J."/>
            <person name="Cuomo C.A."/>
            <person name="van Kan J.A.L."/>
            <person name="Viaud M."/>
            <person name="Benito E.P."/>
            <person name="Couloux A."/>
            <person name="Coutinho P.M."/>
            <person name="de Vries R.P."/>
            <person name="Dyer P.S."/>
            <person name="Fillinger S."/>
            <person name="Fournier E."/>
            <person name="Gout L."/>
            <person name="Hahn M."/>
            <person name="Kohn L."/>
            <person name="Lapalu N."/>
            <person name="Plummer K.M."/>
            <person name="Pradier J.-M."/>
            <person name="Quevillon E."/>
            <person name="Sharon A."/>
            <person name="Simon A."/>
            <person name="ten Have A."/>
            <person name="Tudzynski B."/>
            <person name="Tudzynski P."/>
            <person name="Wincker P."/>
            <person name="Andrew M."/>
            <person name="Anthouard V."/>
            <person name="Beever R.E."/>
            <person name="Beffa R."/>
            <person name="Benoit I."/>
            <person name="Bouzid O."/>
            <person name="Brault B."/>
            <person name="Chen Z."/>
            <person name="Choquer M."/>
            <person name="Collemare J."/>
            <person name="Cotton P."/>
            <person name="Danchin E.G."/>
            <person name="Da Silva C."/>
            <person name="Gautier A."/>
            <person name="Giraud C."/>
            <person name="Giraud T."/>
            <person name="Gonzalez C."/>
            <person name="Grossetete S."/>
            <person name="Gueldener U."/>
            <person name="Henrissat B."/>
            <person name="Howlett B.J."/>
            <person name="Kodira C."/>
            <person name="Kretschmer M."/>
            <person name="Lappartient A."/>
            <person name="Leroch M."/>
            <person name="Levis C."/>
            <person name="Mauceli E."/>
            <person name="Neuveglise C."/>
            <person name="Oeser B."/>
            <person name="Pearson M."/>
            <person name="Poulain J."/>
            <person name="Poussereau N."/>
            <person name="Quesneville H."/>
            <person name="Rascle C."/>
            <person name="Schumacher J."/>
            <person name="Segurens B."/>
            <person name="Sexton A."/>
            <person name="Silva E."/>
            <person name="Sirven C."/>
            <person name="Soanes D.M."/>
            <person name="Talbot N.J."/>
            <person name="Templeton M."/>
            <person name="Yandava C."/>
            <person name="Yarden O."/>
            <person name="Zeng Q."/>
            <person name="Rollins J.A."/>
            <person name="Lebrun M.-H."/>
            <person name="Dickman M."/>
        </authorList>
    </citation>
    <scope>NUCLEOTIDE SEQUENCE [LARGE SCALE GENOMIC DNA]</scope>
    <source>
        <strain>B05.10</strain>
    </source>
</reference>
<reference key="2">
    <citation type="journal article" date="2012" name="Eukaryot. Cell">
        <title>Genome update of Botrytis cinerea strains B05.10 and T4.</title>
        <authorList>
            <person name="Staats M."/>
            <person name="van Kan J.A.L."/>
        </authorList>
    </citation>
    <scope>NUCLEOTIDE SEQUENCE [LARGE SCALE GENOMIC DNA]</scope>
    <scope>GENOME REANNOTATION</scope>
    <source>
        <strain>B05.10</strain>
    </source>
</reference>
<reference key="3">
    <citation type="journal article" date="2017" name="Mol. Plant Pathol.">
        <title>A gapless genome sequence of the fungus Botrytis cinerea.</title>
        <authorList>
            <person name="van Kan J.A.L."/>
            <person name="Stassen J.H.M."/>
            <person name="Mosbach A."/>
            <person name="van der Lee T.A.J."/>
            <person name="Faino L."/>
            <person name="Farmer A.D."/>
            <person name="Papasotiriou D.G."/>
            <person name="Zhou S."/>
            <person name="Seidl M.F."/>
            <person name="Cottam E."/>
            <person name="Edel D."/>
            <person name="Hahn M."/>
            <person name="Schwartz D.C."/>
            <person name="Dietrich R.A."/>
            <person name="Widdison S."/>
            <person name="Scalliet G."/>
        </authorList>
    </citation>
    <scope>NUCLEOTIDE SEQUENCE [LARGE SCALE GENOMIC DNA]</scope>
    <scope>GENOME REANNOTATION</scope>
    <source>
        <strain>B05.10</strain>
    </source>
</reference>
<comment type="subunit">
    <text evidence="1">Component of the small ribosomal subunit. Mature ribosomes consist of a small (40S) and a large (60S) subunit. The 40S subunit contains about 33 different proteins and 1 molecule of RNA (18S). The 60S subunit contains about 49 different proteins and 3 molecules of RNA (25S, 5.8S and 5S).</text>
</comment>
<comment type="subcellular location">
    <subcellularLocation>
        <location evidence="1">Cytoplasm</location>
    </subcellularLocation>
</comment>
<comment type="similarity">
    <text evidence="1">Belongs to the eukaryotic ribosomal protein eS1 family.</text>
</comment>
<keyword id="KW-0007">Acetylation</keyword>
<keyword id="KW-0963">Cytoplasm</keyword>
<keyword id="KW-1185">Reference proteome</keyword>
<keyword id="KW-0687">Ribonucleoprotein</keyword>
<keyword id="KW-0689">Ribosomal protein</keyword>
<protein>
    <recommendedName>
        <fullName evidence="1">Small ribosomal subunit protein eS1</fullName>
    </recommendedName>
    <alternativeName>
        <fullName evidence="2">40S ribosomal protein S1</fullName>
    </alternativeName>
</protein>
<name>RS3A_BOTFB</name>